<feature type="chain" id="PRO_0000147153" description="tRNA(Met) cytidine acetate ligase">
    <location>
        <begin position="1"/>
        <end position="393"/>
    </location>
</feature>
<feature type="binding site" evidence="1">
    <location>
        <position position="81"/>
    </location>
    <ligand>
        <name>ATP</name>
        <dbReference type="ChEBI" id="CHEBI:30616"/>
    </ligand>
</feature>
<feature type="binding site" evidence="1">
    <location>
        <position position="142"/>
    </location>
    <ligand>
        <name>ATP</name>
        <dbReference type="ChEBI" id="CHEBI:30616"/>
    </ligand>
</feature>
<feature type="binding site" evidence="1">
    <location>
        <position position="167"/>
    </location>
    <ligand>
        <name>ATP</name>
        <dbReference type="ChEBI" id="CHEBI:30616"/>
    </ligand>
</feature>
<accession>Q732E3</accession>
<gene>
    <name evidence="1" type="primary">tmcAL</name>
    <name type="ordered locus">BCE_3971</name>
</gene>
<reference key="1">
    <citation type="journal article" date="2004" name="Nucleic Acids Res.">
        <title>The genome sequence of Bacillus cereus ATCC 10987 reveals metabolic adaptations and a large plasmid related to Bacillus anthracis pXO1.</title>
        <authorList>
            <person name="Rasko D.A."/>
            <person name="Ravel J."/>
            <person name="Oekstad O.A."/>
            <person name="Helgason E."/>
            <person name="Cer R.Z."/>
            <person name="Jiang L."/>
            <person name="Shores K.A."/>
            <person name="Fouts D.E."/>
            <person name="Tourasse N.J."/>
            <person name="Angiuoli S.V."/>
            <person name="Kolonay J.F."/>
            <person name="Nelson W.C."/>
            <person name="Kolstoe A.-B."/>
            <person name="Fraser C.M."/>
            <person name="Read T.D."/>
        </authorList>
    </citation>
    <scope>NUCLEOTIDE SEQUENCE [LARGE SCALE GENOMIC DNA]</scope>
    <source>
        <strain>ATCC 10987 / NRS 248</strain>
    </source>
</reference>
<dbReference type="EC" id="6.3.4.-" evidence="1"/>
<dbReference type="EMBL" id="AE017194">
    <property type="protein sequence ID" value="AAS42874.1"/>
    <property type="molecule type" value="Genomic_DNA"/>
</dbReference>
<dbReference type="SMR" id="Q732E3"/>
<dbReference type="KEGG" id="bca:BCE_3971"/>
<dbReference type="HOGENOM" id="CLU_038915_0_2_9"/>
<dbReference type="Proteomes" id="UP000002527">
    <property type="component" value="Chromosome"/>
</dbReference>
<dbReference type="GO" id="GO:0005737">
    <property type="term" value="C:cytoplasm"/>
    <property type="evidence" value="ECO:0007669"/>
    <property type="project" value="UniProtKB-SubCell"/>
</dbReference>
<dbReference type="GO" id="GO:0005524">
    <property type="term" value="F:ATP binding"/>
    <property type="evidence" value="ECO:0007669"/>
    <property type="project" value="UniProtKB-KW"/>
</dbReference>
<dbReference type="GO" id="GO:0016879">
    <property type="term" value="F:ligase activity, forming carbon-nitrogen bonds"/>
    <property type="evidence" value="ECO:0007669"/>
    <property type="project" value="UniProtKB-UniRule"/>
</dbReference>
<dbReference type="GO" id="GO:0000049">
    <property type="term" value="F:tRNA binding"/>
    <property type="evidence" value="ECO:0007669"/>
    <property type="project" value="UniProtKB-KW"/>
</dbReference>
<dbReference type="GO" id="GO:0006400">
    <property type="term" value="P:tRNA modification"/>
    <property type="evidence" value="ECO:0007669"/>
    <property type="project" value="UniProtKB-UniRule"/>
</dbReference>
<dbReference type="Gene3D" id="3.40.50.620">
    <property type="entry name" value="HUPs"/>
    <property type="match status" value="1"/>
</dbReference>
<dbReference type="HAMAP" id="MF_01539">
    <property type="entry name" value="TmcAL"/>
    <property type="match status" value="1"/>
</dbReference>
<dbReference type="InterPro" id="IPR014729">
    <property type="entry name" value="Rossmann-like_a/b/a_fold"/>
</dbReference>
<dbReference type="InterPro" id="IPR008513">
    <property type="entry name" value="tRNA(Met)_cyd_acetate_ligase"/>
</dbReference>
<dbReference type="NCBIfam" id="NF010191">
    <property type="entry name" value="PRK13670.1"/>
    <property type="match status" value="1"/>
</dbReference>
<dbReference type="PANTHER" id="PTHR37825">
    <property type="entry name" value="TRNA(MET) CYTIDINE ACETATE LIGASE"/>
    <property type="match status" value="1"/>
</dbReference>
<dbReference type="PANTHER" id="PTHR37825:SF1">
    <property type="entry name" value="TRNA(MET) CYTIDINE ACETATE LIGASE"/>
    <property type="match status" value="1"/>
</dbReference>
<dbReference type="Pfam" id="PF05636">
    <property type="entry name" value="HIGH_NTase1"/>
    <property type="match status" value="1"/>
</dbReference>
<dbReference type="SUPFAM" id="SSF52374">
    <property type="entry name" value="Nucleotidylyl transferase"/>
    <property type="match status" value="1"/>
</dbReference>
<comment type="function">
    <text evidence="1">Catalyzes the formation of N(4)-acetylcytidine (ac(4)C) at the wobble position of elongator tRNA(Met), using acetate and ATP as substrates. First activates an acetate ion to form acetyladenylate (Ac-AMP) and then transfers the acetyl group to tRNA to form ac(4)C34.</text>
</comment>
<comment type="catalytic activity">
    <reaction evidence="1">
        <text>cytidine(34) in elongator tRNA(Met) + acetate + ATP = N(4)-acetylcytidine(34) in elongator tRNA(Met) + AMP + diphosphate</text>
        <dbReference type="Rhea" id="RHEA:58144"/>
        <dbReference type="Rhea" id="RHEA-COMP:10693"/>
        <dbReference type="Rhea" id="RHEA-COMP:10694"/>
        <dbReference type="ChEBI" id="CHEBI:30089"/>
        <dbReference type="ChEBI" id="CHEBI:30616"/>
        <dbReference type="ChEBI" id="CHEBI:33019"/>
        <dbReference type="ChEBI" id="CHEBI:74900"/>
        <dbReference type="ChEBI" id="CHEBI:82748"/>
        <dbReference type="ChEBI" id="CHEBI:456215"/>
    </reaction>
</comment>
<comment type="subcellular location">
    <subcellularLocation>
        <location evidence="1">Cytoplasm</location>
    </subcellularLocation>
</comment>
<comment type="similarity">
    <text evidence="1">Belongs to the TmcAL family.</text>
</comment>
<keyword id="KW-0067">ATP-binding</keyword>
<keyword id="KW-0963">Cytoplasm</keyword>
<keyword id="KW-0436">Ligase</keyword>
<keyword id="KW-0547">Nucleotide-binding</keyword>
<keyword id="KW-0694">RNA-binding</keyword>
<keyword id="KW-0819">tRNA processing</keyword>
<keyword id="KW-0820">tRNA-binding</keyword>
<evidence type="ECO:0000255" key="1">
    <source>
        <dbReference type="HAMAP-Rule" id="MF_01539"/>
    </source>
</evidence>
<sequence length="393" mass="45277">MQQTKKLTHSDITIAVMSGPFLQRGEPALVSKWYRTKMALACGVDLVVELPYAFSTQKAETFANGAISILNALHVSEICFGSEDGQIENFYNTISVQKNEEETFNRLVKQFMNAGNSYAKATSEAFLHILSSEKNIDMSQPNNILGFQYIKAILMQNSSMQAQTIKRFASHYHDETFNDQHIASATSIRKQLFSENSSFTEIEPFIPKATASLLASYKQNYGTLHNWEQYFSFFKYKLMTMSPEDLRHIYEIEEGLEHRILSKIQTSSSFHSFMEALKTKRYTWTRLQRACTHILTNTTKEEIHCANIEQHAPYIRLLGMSQKGQTYLSKNKKKIELPILTHTKTFDHPTLHIDRKANSVYFSIIQEPLRTQLLKQDATHHPIRYDETTAKFL</sequence>
<proteinExistence type="inferred from homology"/>
<name>TMCAL_BACC1</name>
<protein>
    <recommendedName>
        <fullName evidence="1">tRNA(Met) cytidine acetate ligase</fullName>
        <ecNumber evidence="1">6.3.4.-</ecNumber>
    </recommendedName>
</protein>
<organism>
    <name type="scientific">Bacillus cereus (strain ATCC 10987 / NRS 248)</name>
    <dbReference type="NCBI Taxonomy" id="222523"/>
    <lineage>
        <taxon>Bacteria</taxon>
        <taxon>Bacillati</taxon>
        <taxon>Bacillota</taxon>
        <taxon>Bacilli</taxon>
        <taxon>Bacillales</taxon>
        <taxon>Bacillaceae</taxon>
        <taxon>Bacillus</taxon>
        <taxon>Bacillus cereus group</taxon>
    </lineage>
</organism>